<accession>Q8DTU9</accession>
<protein>
    <recommendedName>
        <fullName evidence="1">Dihydroorotate dehydrogenase B (NAD(+)), electron transfer subunit</fullName>
    </recommendedName>
    <alternativeName>
        <fullName evidence="1">Dihydroorotate oxidase B, electron transfer subunit</fullName>
    </alternativeName>
</protein>
<evidence type="ECO:0000255" key="1">
    <source>
        <dbReference type="HAMAP-Rule" id="MF_01211"/>
    </source>
</evidence>
<organism>
    <name type="scientific">Streptococcus mutans serotype c (strain ATCC 700610 / UA159)</name>
    <dbReference type="NCBI Taxonomy" id="210007"/>
    <lineage>
        <taxon>Bacteria</taxon>
        <taxon>Bacillati</taxon>
        <taxon>Bacillota</taxon>
        <taxon>Bacilli</taxon>
        <taxon>Lactobacillales</taxon>
        <taxon>Streptococcaceae</taxon>
        <taxon>Streptococcus</taxon>
    </lineage>
</organism>
<comment type="function">
    <text evidence="1">Responsible for channeling the electrons from the oxidation of dihydroorotate from the FMN redox center in the PyrD type B subunit to the ultimate electron acceptor NAD(+).</text>
</comment>
<comment type="cofactor">
    <cofactor evidence="1">
        <name>[2Fe-2S] cluster</name>
        <dbReference type="ChEBI" id="CHEBI:190135"/>
    </cofactor>
    <text evidence="1">Binds 1 [2Fe-2S] cluster per subunit.</text>
</comment>
<comment type="cofactor">
    <cofactor evidence="1">
        <name>FAD</name>
        <dbReference type="ChEBI" id="CHEBI:57692"/>
    </cofactor>
    <text evidence="1">Binds 1 FAD per subunit.</text>
</comment>
<comment type="pathway">
    <text evidence="1">Pyrimidine metabolism; UMP biosynthesis via de novo pathway; orotate from (S)-dihydroorotate (NAD(+) route): step 1/1.</text>
</comment>
<comment type="subunit">
    <text evidence="1">Heterotetramer of 2 PyrK and 2 PyrD type B subunits.</text>
</comment>
<comment type="similarity">
    <text evidence="1">Belongs to the PyrK family.</text>
</comment>
<dbReference type="EMBL" id="AE014133">
    <property type="protein sequence ID" value="AAN58909.1"/>
    <property type="molecule type" value="Genomic_DNA"/>
</dbReference>
<dbReference type="RefSeq" id="NP_721603.1">
    <property type="nucleotide sequence ID" value="NC_004350.2"/>
</dbReference>
<dbReference type="RefSeq" id="WP_002263218.1">
    <property type="nucleotide sequence ID" value="NC_004350.2"/>
</dbReference>
<dbReference type="SMR" id="Q8DTU9"/>
<dbReference type="STRING" id="210007.SMU_1224"/>
<dbReference type="KEGG" id="smu:SMU_1224"/>
<dbReference type="PATRIC" id="fig|210007.7.peg.1097"/>
<dbReference type="eggNOG" id="COG0543">
    <property type="taxonomic scope" value="Bacteria"/>
</dbReference>
<dbReference type="HOGENOM" id="CLU_003827_1_2_9"/>
<dbReference type="OrthoDB" id="9778346at2"/>
<dbReference type="PhylomeDB" id="Q8DTU9"/>
<dbReference type="UniPathway" id="UPA00070">
    <property type="reaction ID" value="UER00945"/>
</dbReference>
<dbReference type="Proteomes" id="UP000002512">
    <property type="component" value="Chromosome"/>
</dbReference>
<dbReference type="GO" id="GO:0051537">
    <property type="term" value="F:2 iron, 2 sulfur cluster binding"/>
    <property type="evidence" value="ECO:0007669"/>
    <property type="project" value="UniProtKB-KW"/>
</dbReference>
<dbReference type="GO" id="GO:0009055">
    <property type="term" value="F:electron transfer activity"/>
    <property type="evidence" value="ECO:0007669"/>
    <property type="project" value="UniProtKB-UniRule"/>
</dbReference>
<dbReference type="GO" id="GO:0050660">
    <property type="term" value="F:flavin adenine dinucleotide binding"/>
    <property type="evidence" value="ECO:0007669"/>
    <property type="project" value="InterPro"/>
</dbReference>
<dbReference type="GO" id="GO:0046872">
    <property type="term" value="F:metal ion binding"/>
    <property type="evidence" value="ECO:0007669"/>
    <property type="project" value="UniProtKB-KW"/>
</dbReference>
<dbReference type="GO" id="GO:0016491">
    <property type="term" value="F:oxidoreductase activity"/>
    <property type="evidence" value="ECO:0007669"/>
    <property type="project" value="InterPro"/>
</dbReference>
<dbReference type="GO" id="GO:0044205">
    <property type="term" value="P:'de novo' UMP biosynthetic process"/>
    <property type="evidence" value="ECO:0007669"/>
    <property type="project" value="UniProtKB-UniRule"/>
</dbReference>
<dbReference type="CDD" id="cd06218">
    <property type="entry name" value="DHOD_e_trans"/>
    <property type="match status" value="1"/>
</dbReference>
<dbReference type="Gene3D" id="2.10.240.10">
    <property type="entry name" value="Dihydroorotate dehydrogenase, electron transfer subunit"/>
    <property type="match status" value="1"/>
</dbReference>
<dbReference type="Gene3D" id="3.40.50.80">
    <property type="entry name" value="Nucleotide-binding domain of ferredoxin-NADP reductase (FNR) module"/>
    <property type="match status" value="1"/>
</dbReference>
<dbReference type="Gene3D" id="2.40.30.10">
    <property type="entry name" value="Translation factors"/>
    <property type="match status" value="1"/>
</dbReference>
<dbReference type="HAMAP" id="MF_01211">
    <property type="entry name" value="DHODB_Fe_S_bind"/>
    <property type="match status" value="1"/>
</dbReference>
<dbReference type="InterPro" id="IPR008333">
    <property type="entry name" value="Cbr1-like_FAD-bd_dom"/>
</dbReference>
<dbReference type="InterPro" id="IPR012165">
    <property type="entry name" value="Cyt_c3_hydrogenase_gsu"/>
</dbReference>
<dbReference type="InterPro" id="IPR037117">
    <property type="entry name" value="Dihydroorotate_DH_ele_sf"/>
</dbReference>
<dbReference type="InterPro" id="IPR019480">
    <property type="entry name" value="Dihydroorotate_DH_Fe-S-bd"/>
</dbReference>
<dbReference type="InterPro" id="IPR023455">
    <property type="entry name" value="Dihydroorotate_DHASE_ETsu"/>
</dbReference>
<dbReference type="InterPro" id="IPR017927">
    <property type="entry name" value="FAD-bd_FR_type"/>
</dbReference>
<dbReference type="InterPro" id="IPR039261">
    <property type="entry name" value="FNR_nucleotide-bd"/>
</dbReference>
<dbReference type="InterPro" id="IPR001433">
    <property type="entry name" value="OxRdtase_FAD/NAD-bd"/>
</dbReference>
<dbReference type="InterPro" id="IPR050353">
    <property type="entry name" value="PyrK_electron_transfer"/>
</dbReference>
<dbReference type="InterPro" id="IPR017938">
    <property type="entry name" value="Riboflavin_synthase-like_b-brl"/>
</dbReference>
<dbReference type="NCBIfam" id="NF000797">
    <property type="entry name" value="PRK00054.1-2"/>
    <property type="match status" value="1"/>
</dbReference>
<dbReference type="NCBIfam" id="NF000799">
    <property type="entry name" value="PRK00054.1-4"/>
    <property type="match status" value="1"/>
</dbReference>
<dbReference type="PANTHER" id="PTHR43513">
    <property type="entry name" value="DIHYDROOROTATE DEHYDROGENASE B (NAD(+)), ELECTRON TRANSFER SUBUNIT"/>
    <property type="match status" value="1"/>
</dbReference>
<dbReference type="PANTHER" id="PTHR43513:SF3">
    <property type="entry name" value="DIHYDROOROTATE DEHYDROGENASE B (NAD(+)), ELECTRON TRANSFER SUBUNIT-RELATED"/>
    <property type="match status" value="1"/>
</dbReference>
<dbReference type="Pfam" id="PF10418">
    <property type="entry name" value="DHODB_Fe-S_bind"/>
    <property type="match status" value="1"/>
</dbReference>
<dbReference type="Pfam" id="PF00970">
    <property type="entry name" value="FAD_binding_6"/>
    <property type="match status" value="1"/>
</dbReference>
<dbReference type="Pfam" id="PF00175">
    <property type="entry name" value="NAD_binding_1"/>
    <property type="match status" value="1"/>
</dbReference>
<dbReference type="PIRSF" id="PIRSF006816">
    <property type="entry name" value="Cyc3_hyd_g"/>
    <property type="match status" value="1"/>
</dbReference>
<dbReference type="PRINTS" id="PR00409">
    <property type="entry name" value="PHDIOXRDTASE"/>
</dbReference>
<dbReference type="SUPFAM" id="SSF52343">
    <property type="entry name" value="Ferredoxin reductase-like, C-terminal NADP-linked domain"/>
    <property type="match status" value="1"/>
</dbReference>
<dbReference type="SUPFAM" id="SSF63380">
    <property type="entry name" value="Riboflavin synthase domain-like"/>
    <property type="match status" value="1"/>
</dbReference>
<dbReference type="PROSITE" id="PS51384">
    <property type="entry name" value="FAD_FR"/>
    <property type="match status" value="1"/>
</dbReference>
<gene>
    <name evidence="1" type="primary">pyrK</name>
    <name type="ordered locus">SMU_1224</name>
</gene>
<feature type="chain" id="PRO_0000148367" description="Dihydroorotate dehydrogenase B (NAD(+)), electron transfer subunit">
    <location>
        <begin position="1"/>
        <end position="258"/>
    </location>
</feature>
<feature type="domain" description="FAD-binding FR-type" evidence="1">
    <location>
        <begin position="2"/>
        <end position="100"/>
    </location>
</feature>
<feature type="binding site" evidence="1">
    <location>
        <begin position="51"/>
        <end position="54"/>
    </location>
    <ligand>
        <name>FAD</name>
        <dbReference type="ChEBI" id="CHEBI:57692"/>
    </ligand>
</feature>
<feature type="binding site" evidence="1">
    <location>
        <begin position="68"/>
        <end position="70"/>
    </location>
    <ligand>
        <name>FAD</name>
        <dbReference type="ChEBI" id="CHEBI:57692"/>
    </ligand>
</feature>
<feature type="binding site" evidence="1">
    <location>
        <begin position="75"/>
        <end position="76"/>
    </location>
    <ligand>
        <name>FAD</name>
        <dbReference type="ChEBI" id="CHEBI:57692"/>
    </ligand>
</feature>
<feature type="binding site" evidence="1">
    <location>
        <position position="220"/>
    </location>
    <ligand>
        <name>[2Fe-2S] cluster</name>
        <dbReference type="ChEBI" id="CHEBI:190135"/>
    </ligand>
</feature>
<feature type="binding site" evidence="1">
    <location>
        <position position="225"/>
    </location>
    <ligand>
        <name>[2Fe-2S] cluster</name>
        <dbReference type="ChEBI" id="CHEBI:190135"/>
    </ligand>
</feature>
<feature type="binding site" evidence="1">
    <location>
        <position position="228"/>
    </location>
    <ligand>
        <name>[2Fe-2S] cluster</name>
        <dbReference type="ChEBI" id="CHEBI:190135"/>
    </ligand>
</feature>
<feature type="binding site" evidence="1">
    <location>
        <position position="244"/>
    </location>
    <ligand>
        <name>[2Fe-2S] cluster</name>
        <dbReference type="ChEBI" id="CHEBI:190135"/>
    </ligand>
</feature>
<proteinExistence type="inferred from homology"/>
<sequence length="258" mass="28030">MILKENLTVVSQREIAPRIFEMVLKGDMVAQMQAGQFLHIRVPDASKLLRRPISIADINKEAQEATIIYRIEGRGTAIFSQLKAGDKLDCLGPQGNGFDLSVIDKGQKALIIGGGIGVPPLLEVAKQLCKKGVEAYAVLGFANKDAVILEEKMSQYATVVVTTDDGSYGQKGYVSTVVDNLDFLADAIYACGAPGMLKYVDKKFEKHPHAYLSTEERMACGMGACYACVVHVKGQEDAQNLRVCEDGPIFETGQIILD</sequence>
<keyword id="KW-0001">2Fe-2S</keyword>
<keyword id="KW-0249">Electron transport</keyword>
<keyword id="KW-0274">FAD</keyword>
<keyword id="KW-0285">Flavoprotein</keyword>
<keyword id="KW-0408">Iron</keyword>
<keyword id="KW-0411">Iron-sulfur</keyword>
<keyword id="KW-0479">Metal-binding</keyword>
<keyword id="KW-0665">Pyrimidine biosynthesis</keyword>
<keyword id="KW-1185">Reference proteome</keyword>
<keyword id="KW-0813">Transport</keyword>
<name>PYRK_STRMU</name>
<reference key="1">
    <citation type="journal article" date="2002" name="Proc. Natl. Acad. Sci. U.S.A.">
        <title>Genome sequence of Streptococcus mutans UA159, a cariogenic dental pathogen.</title>
        <authorList>
            <person name="Ajdic D.J."/>
            <person name="McShan W.M."/>
            <person name="McLaughlin R.E."/>
            <person name="Savic G."/>
            <person name="Chang J."/>
            <person name="Carson M.B."/>
            <person name="Primeaux C."/>
            <person name="Tian R."/>
            <person name="Kenton S."/>
            <person name="Jia H.G."/>
            <person name="Lin S.P."/>
            <person name="Qian Y."/>
            <person name="Li S."/>
            <person name="Zhu H."/>
            <person name="Najar F.Z."/>
            <person name="Lai H."/>
            <person name="White J."/>
            <person name="Roe B.A."/>
            <person name="Ferretti J.J."/>
        </authorList>
    </citation>
    <scope>NUCLEOTIDE SEQUENCE [LARGE SCALE GENOMIC DNA]</scope>
    <source>
        <strain>ATCC 700610 / UA159</strain>
    </source>
</reference>